<accession>A1AA51</accession>
<reference key="1">
    <citation type="journal article" date="2007" name="J. Bacteriol.">
        <title>The genome sequence of avian pathogenic Escherichia coli strain O1:K1:H7 shares strong similarities with human extraintestinal pathogenic E. coli genomes.</title>
        <authorList>
            <person name="Johnson T.J."/>
            <person name="Kariyawasam S."/>
            <person name="Wannemuehler Y."/>
            <person name="Mangiamele P."/>
            <person name="Johnson S.J."/>
            <person name="Doetkott C."/>
            <person name="Skyberg J.A."/>
            <person name="Lynne A.M."/>
            <person name="Johnson J.R."/>
            <person name="Nolan L.K."/>
        </authorList>
    </citation>
    <scope>NUCLEOTIDE SEQUENCE [LARGE SCALE GENOMIC DNA]</scope>
</reference>
<proteinExistence type="inferred from homology"/>
<dbReference type="EC" id="3.1.21.10"/>
<dbReference type="EMBL" id="CP000468">
    <property type="protein sequence ID" value="ABJ00541.1"/>
    <property type="molecule type" value="Genomic_DNA"/>
</dbReference>
<dbReference type="RefSeq" id="WP_001099712.1">
    <property type="nucleotide sequence ID" value="NZ_CADILS010000019.1"/>
</dbReference>
<dbReference type="SMR" id="A1AA51"/>
<dbReference type="KEGG" id="ecv:APECO1_239"/>
<dbReference type="HOGENOM" id="CLU_139466_0_2_6"/>
<dbReference type="Proteomes" id="UP000008216">
    <property type="component" value="Chromosome"/>
</dbReference>
<dbReference type="GO" id="GO:0008821">
    <property type="term" value="F:crossover junction DNA endonuclease activity"/>
    <property type="evidence" value="ECO:0007669"/>
    <property type="project" value="InterPro"/>
</dbReference>
<dbReference type="GO" id="GO:0000287">
    <property type="term" value="F:magnesium ion binding"/>
    <property type="evidence" value="ECO:0007669"/>
    <property type="project" value="InterPro"/>
</dbReference>
<dbReference type="GO" id="GO:0006310">
    <property type="term" value="P:DNA recombination"/>
    <property type="evidence" value="ECO:0007669"/>
    <property type="project" value="UniProtKB-KW"/>
</dbReference>
<dbReference type="GO" id="GO:0006281">
    <property type="term" value="P:DNA repair"/>
    <property type="evidence" value="ECO:0007669"/>
    <property type="project" value="UniProtKB-KW"/>
</dbReference>
<dbReference type="FunFam" id="3.30.1330.70:FF:000001">
    <property type="entry name" value="Crossover junction endodeoxyribonuclease RusA"/>
    <property type="match status" value="1"/>
</dbReference>
<dbReference type="Gene3D" id="3.30.1330.70">
    <property type="entry name" value="Holliday junction resolvase RusA"/>
    <property type="match status" value="1"/>
</dbReference>
<dbReference type="InterPro" id="IPR016281">
    <property type="entry name" value="Endonuclease_RusA"/>
</dbReference>
<dbReference type="InterPro" id="IPR008822">
    <property type="entry name" value="Endonuclease_RusA-like"/>
</dbReference>
<dbReference type="InterPro" id="IPR036614">
    <property type="entry name" value="RusA-like_sf"/>
</dbReference>
<dbReference type="NCBIfam" id="NF007305">
    <property type="entry name" value="PRK09786.1"/>
    <property type="match status" value="1"/>
</dbReference>
<dbReference type="Pfam" id="PF05866">
    <property type="entry name" value="RusA"/>
    <property type="match status" value="1"/>
</dbReference>
<dbReference type="PIRSF" id="PIRSF001007">
    <property type="entry name" value="RusA"/>
    <property type="match status" value="1"/>
</dbReference>
<dbReference type="SUPFAM" id="SSF103084">
    <property type="entry name" value="Holliday junction resolvase RusA"/>
    <property type="match status" value="1"/>
</dbReference>
<sequence>MNTYSITLPWPPSNNRYYRHNRGRTHVSAEGQAYRDNVARIIKNAMLDIGLAMPVKIRIECHMPDRRRRDLDNLQKAAFDALTKAGFWLDDAQVVDYRVVKMPVTKGGRLELTITEMGNE</sequence>
<feature type="chain" id="PRO_0000324836" description="Crossover junction endodeoxyribonuclease RusA">
    <location>
        <begin position="1"/>
        <end position="120"/>
    </location>
</feature>
<feature type="region of interest" description="DNA-binding" evidence="1">
    <location>
        <begin position="13"/>
        <end position="16"/>
    </location>
</feature>
<feature type="region of interest" description="DNA-binding" evidence="1">
    <location>
        <begin position="66"/>
        <end position="73"/>
    </location>
</feature>
<feature type="binding site" evidence="1">
    <location>
        <position position="70"/>
    </location>
    <ligand>
        <name>Mg(2+)</name>
        <dbReference type="ChEBI" id="CHEBI:18420"/>
    </ligand>
</feature>
<feature type="binding site" evidence="1">
    <location>
        <position position="72"/>
    </location>
    <ligand>
        <name>Mg(2+)</name>
        <dbReference type="ChEBI" id="CHEBI:18420"/>
    </ligand>
</feature>
<feature type="binding site" evidence="1">
    <location>
        <position position="91"/>
    </location>
    <ligand>
        <name>Mg(2+)</name>
        <dbReference type="ChEBI" id="CHEBI:18420"/>
    </ligand>
</feature>
<organism>
    <name type="scientific">Escherichia coli O1:K1 / APEC</name>
    <dbReference type="NCBI Taxonomy" id="405955"/>
    <lineage>
        <taxon>Bacteria</taxon>
        <taxon>Pseudomonadati</taxon>
        <taxon>Pseudomonadota</taxon>
        <taxon>Gammaproteobacteria</taxon>
        <taxon>Enterobacterales</taxon>
        <taxon>Enterobacteriaceae</taxon>
        <taxon>Escherichia</taxon>
    </lineage>
</organism>
<keyword id="KW-0227">DNA damage</keyword>
<keyword id="KW-0233">DNA recombination</keyword>
<keyword id="KW-0234">DNA repair</keyword>
<keyword id="KW-0255">Endonuclease</keyword>
<keyword id="KW-0378">Hydrolase</keyword>
<keyword id="KW-0460">Magnesium</keyword>
<keyword id="KW-0479">Metal-binding</keyword>
<keyword id="KW-0540">Nuclease</keyword>
<keyword id="KW-1185">Reference proteome</keyword>
<name>RUSA_ECOK1</name>
<protein>
    <recommendedName>
        <fullName>Crossover junction endodeoxyribonuclease RusA</fullName>
        <ecNumber>3.1.21.10</ecNumber>
    </recommendedName>
    <alternativeName>
        <fullName>Holliday junction nuclease RusA</fullName>
    </alternativeName>
    <alternativeName>
        <fullName>Holliday junction resolvase</fullName>
    </alternativeName>
</protein>
<comment type="function">
    <text evidence="1">Endonuclease that resolves Holliday junction intermediates made during homologous genetic recombination and DNA repair. Exhibits sequence and structure-selective cleavage of four-way DNA junctions, where it introduces symmetrical nicks in two strands of the same polarity at the 5' side of CC dinucleotides. Corrects the defects in genetic recombination and DNA repair associated with inactivation of RuvAB or RuvC (By similarity).</text>
</comment>
<comment type="catalytic activity">
    <reaction>
        <text>Endonucleolytic cleavage at a junction such as a reciprocal single-stranded crossover between two homologous DNA duplexes (Holliday junction).</text>
        <dbReference type="EC" id="3.1.21.10"/>
    </reaction>
</comment>
<comment type="cofactor">
    <cofactor evidence="1">
        <name>Mg(2+)</name>
        <dbReference type="ChEBI" id="CHEBI:18420"/>
    </cofactor>
    <text evidence="1">Binds 1 Mg(2+) ion per subunit.</text>
</comment>
<comment type="subunit">
    <text evidence="1">Homodimer.</text>
</comment>
<comment type="similarity">
    <text evidence="2">Belongs to the RusA family.</text>
</comment>
<gene>
    <name type="primary">rusA</name>
    <name type="ordered locus">Ecok1_10470</name>
    <name type="ORF">APECO1_239</name>
</gene>
<evidence type="ECO:0000250" key="1"/>
<evidence type="ECO:0000305" key="2"/>